<evidence type="ECO:0000250" key="1"/>
<evidence type="ECO:0000305" key="2"/>
<name>NIFW_TRIEI</name>
<feature type="chain" id="PRO_0000219543" description="Nitrogenase-stabilizing/protective protein NifW">
    <location>
        <begin position="1"/>
        <end position="103"/>
    </location>
</feature>
<protein>
    <recommendedName>
        <fullName>Nitrogenase-stabilizing/protective protein NifW</fullName>
    </recommendedName>
</protein>
<accession>Q9KJL4</accession>
<accession>Q10X74</accession>
<gene>
    <name type="primary">nifW</name>
    <name type="ordered locus">Tery_4142</name>
</gene>
<keyword id="KW-0535">Nitrogen fixation</keyword>
<reference key="1">
    <citation type="submission" date="1999-07" db="EMBL/GenBank/DDBJ databases">
        <title>Organization of the nif genes of the nonheterocystous cyanobacterium Trichodesmium sp. IMS101.</title>
        <authorList>
            <person name="Dominic B."/>
            <person name="Zani S."/>
            <person name="Chen Y.-B."/>
            <person name="Mellon M.T."/>
            <person name="Zehr J.P."/>
        </authorList>
    </citation>
    <scope>NUCLEOTIDE SEQUENCE [GENOMIC DNA]</scope>
</reference>
<reference key="2">
    <citation type="journal article" date="2015" name="Proc. Natl. Acad. Sci. U.S.A.">
        <title>Trichodesmium genome maintains abundant, widespread noncoding DNA in situ, despite oligotrophic lifestyle.</title>
        <authorList>
            <person name="Walworth N."/>
            <person name="Pfreundt U."/>
            <person name="Nelson W.C."/>
            <person name="Mincer T."/>
            <person name="Heidelberg J.F."/>
            <person name="Fu F."/>
            <person name="Waterbury J.B."/>
            <person name="Glavina del Rio T."/>
            <person name="Goodwin L."/>
            <person name="Kyrpides N.C."/>
            <person name="Land M.L."/>
            <person name="Woyke T."/>
            <person name="Hutchins D.A."/>
            <person name="Hess W.R."/>
            <person name="Webb E.A."/>
        </authorList>
    </citation>
    <scope>NUCLEOTIDE SEQUENCE [LARGE SCALE GENOMIC DNA]</scope>
    <source>
        <strain>IMS101</strain>
    </source>
</reference>
<comment type="function">
    <text evidence="1">May protect the nitrogenase Fe-Mo protein from oxidative damage.</text>
</comment>
<comment type="subunit">
    <text evidence="1">Homotrimer; associates with NifD.</text>
</comment>
<comment type="similarity">
    <text evidence="2">Belongs to the NifW family.</text>
</comment>
<proteinExistence type="inferred from homology"/>
<sequence>MKTLKNFNELVDAEDFLNFFEIPFDQTTVNVNRLHILKVFSSAIAEVDENTKLTETEKITAYKAGLESAYKTFLTSNAQEQKVFPVFQKEHKDVVKLTEISAE</sequence>
<dbReference type="EMBL" id="AF167538">
    <property type="protein sequence ID" value="AAF82643.1"/>
    <property type="molecule type" value="Genomic_DNA"/>
</dbReference>
<dbReference type="EMBL" id="CP000393">
    <property type="protein sequence ID" value="ABG53150.1"/>
    <property type="molecule type" value="Genomic_DNA"/>
</dbReference>
<dbReference type="RefSeq" id="WP_011613480.1">
    <property type="nucleotide sequence ID" value="NC_008312.1"/>
</dbReference>
<dbReference type="SMR" id="Q9KJL4"/>
<dbReference type="STRING" id="203124.Tery_4142"/>
<dbReference type="KEGG" id="ter:Tery_4142"/>
<dbReference type="eggNOG" id="ENOG50330W8">
    <property type="taxonomic scope" value="Bacteria"/>
</dbReference>
<dbReference type="HOGENOM" id="CLU_145318_1_0_3"/>
<dbReference type="OrthoDB" id="9811868at2"/>
<dbReference type="GO" id="GO:0009399">
    <property type="term" value="P:nitrogen fixation"/>
    <property type="evidence" value="ECO:0007669"/>
    <property type="project" value="UniProtKB-UniRule"/>
</dbReference>
<dbReference type="HAMAP" id="MF_00529">
    <property type="entry name" value="NifW"/>
    <property type="match status" value="1"/>
</dbReference>
<dbReference type="InterPro" id="IPR004893">
    <property type="entry name" value="NifW"/>
</dbReference>
<dbReference type="NCBIfam" id="NF010702">
    <property type="entry name" value="PRK14102.1"/>
    <property type="match status" value="1"/>
</dbReference>
<dbReference type="Pfam" id="PF03206">
    <property type="entry name" value="NifW"/>
    <property type="match status" value="1"/>
</dbReference>
<dbReference type="PIRSF" id="PIRSF005790">
    <property type="entry name" value="NifW"/>
    <property type="match status" value="1"/>
</dbReference>
<organism>
    <name type="scientific">Trichodesmium erythraeum (strain IMS101)</name>
    <dbReference type="NCBI Taxonomy" id="203124"/>
    <lineage>
        <taxon>Bacteria</taxon>
        <taxon>Bacillati</taxon>
        <taxon>Cyanobacteriota</taxon>
        <taxon>Cyanophyceae</taxon>
        <taxon>Oscillatoriophycideae</taxon>
        <taxon>Oscillatoriales</taxon>
        <taxon>Microcoleaceae</taxon>
        <taxon>Trichodesmium</taxon>
    </lineage>
</organism>